<evidence type="ECO:0000269" key="1">
    <source>
    </source>
</evidence>
<evidence type="ECO:0000269" key="2">
    <source>
    </source>
</evidence>
<evidence type="ECO:0000303" key="3">
    <source>
    </source>
</evidence>
<evidence type="ECO:0000303" key="4">
    <source>
    </source>
</evidence>
<evidence type="ECO:0000305" key="5"/>
<evidence type="ECO:0007829" key="6">
    <source>
        <dbReference type="PDB" id="1M2X"/>
    </source>
</evidence>
<comment type="function">
    <text evidence="2">Confers resistance to the different beta-lactams antibiotics (penicillin, cephalosporin and carbapenem) via the hydrolysis of the beta-lactam ring.</text>
</comment>
<comment type="catalytic activity">
    <reaction evidence="2">
        <text>a beta-lactam + H2O = a substituted beta-amino acid</text>
        <dbReference type="Rhea" id="RHEA:20401"/>
        <dbReference type="ChEBI" id="CHEBI:15377"/>
        <dbReference type="ChEBI" id="CHEBI:35627"/>
        <dbReference type="ChEBI" id="CHEBI:140347"/>
        <dbReference type="EC" id="3.5.2.6"/>
    </reaction>
</comment>
<comment type="cofactor">
    <cofactor evidence="1">
        <name>Zn(2+)</name>
        <dbReference type="ChEBI" id="CHEBI:29105"/>
    </cofactor>
    <text evidence="1">Binds 2 Zn(2+) ions per subunit.</text>
</comment>
<comment type="activity regulation">
    <text evidence="2">Inhibited by chelating agents such as EDTA, 1-10 phenanthroline and pyridine-2,6-dicarboxylic acid.</text>
</comment>
<comment type="biophysicochemical properties">
    <kinetics>
        <KM evidence="2">24 uM for cefoxitin</KM>
        <KM evidence="2">29 uM for cephaloridine</KM>
        <KM evidence="2">32 uM for penicillin G</KM>
        <KM evidence="2">43 uM for 6-beta-iodopenicillanate</KM>
        <KM evidence="2">66 uM for nitrocefin</KM>
        <KM evidence="2">180 uM for cefotaxime</KM>
        <KM evidence="2">370 uM for imipenem</KM>
        <text evidence="2">kcat is 350 sec(-1) for lactamase activity with imipenem as substrate. kcat is 300 sec(-1) for lactamase activity with 6-beta-iodopenicillanate as substrate. kcat is 280 sec(-1) for lactamase activity with penicillin G as substrate. kcat is 39 sec(-1) for lactamase activity with cefotaxime as substrate. kcat is 17 sec(-1) for lactamase activity with nitrocefin as substrate. kcat is 14 sec(-1) for lactamase activity with cephaloridine as substrate. kcat is 6 sec(-1) for lactamase activity with cefoxitin as substrate.</text>
    </kinetics>
</comment>
<comment type="subunit">
    <text evidence="1 2">Monomer.</text>
</comment>
<comment type="subcellular location">
    <subcellularLocation>
        <location evidence="5">Periplasm</location>
    </subcellularLocation>
</comment>
<comment type="similarity">
    <text evidence="5">Belongs to the metallo-beta-lactamase superfamily. Class-B beta-lactamase family.</text>
</comment>
<gene>
    <name type="primary">blaB1</name>
    <name evidence="4" type="synonym">blaB</name>
</gene>
<reference key="1">
    <citation type="journal article" date="1998" name="Biochem. J.">
        <title>Characterization and sequence of the Chryseobacterium (Flavobacterium) meningosepticum carbapenemase: a new molecular class B beta-lactamase showing a broad substrate profile.</title>
        <authorList>
            <person name="Rossolini G.M."/>
            <person name="Franceschini N."/>
            <person name="Riccio M.L."/>
            <person name="Mercuri P.S."/>
            <person name="Perilli M."/>
            <person name="Galleni M."/>
            <person name="Frere J.-M."/>
            <person name="Amicosante G."/>
        </authorList>
    </citation>
    <scope>NUCLEOTIDE SEQUENCE [GENOMIC DNA]</scope>
    <scope>PROTEIN SEQUENCE OF 23-27</scope>
    <scope>FUNCTION</scope>
    <scope>CATALYTIC ACTIVITY</scope>
    <scope>BIOPHYSICOCHEMICAL PROPERTIES</scope>
    <scope>ACTIVITY REGULATION</scope>
    <scope>SUBUNIT</scope>
    <scope>SUBSTRATE SPECIFICITY</scope>
    <source>
        <strain>ATCC 13254 / CCUG 4310 / CIP 6058 / LMG 12280 / NCTC 10585</strain>
    </source>
</reference>
<reference key="2">
    <citation type="journal article" date="2000" name="Antimicrob. Agents Chemother.">
        <title>Molecular and biochemical heterogeneity of class B carbapenem-hydrolyzing beta-lactamases in Chryseobacterium meningosepticum.</title>
        <authorList>
            <person name="Bellais S."/>
            <person name="Aubert D."/>
            <person name="Naas T."/>
            <person name="Nordmann P."/>
        </authorList>
    </citation>
    <scope>NUCLEOTIDE SEQUENCE [GENOMIC DNA]</scope>
    <source>
        <strain>PINT</strain>
    </source>
</reference>
<reference key="3">
    <citation type="journal article" date="2003" name="J. Biol. Chem.">
        <title>The 1.5-A structure of Chryseobacterium meningosepticum zinc beta-lactamase in complex with the inhibitor, D-captopril.</title>
        <authorList>
            <person name="Garcia-Saez I."/>
            <person name="Hopkins J."/>
            <person name="Papamicael C."/>
            <person name="Franceschini N."/>
            <person name="Amicosante G."/>
            <person name="Rossolini G.M."/>
            <person name="Galleni M."/>
            <person name="Frere J.M."/>
            <person name="Dideberg O."/>
        </authorList>
    </citation>
    <scope>X-RAY CRYSTALLOGRAPHY (1.50 ANGSTROMS) OF 27-222 IN COMPLEX WITH SUBSTRATE ANALOG AND ZINC IONS</scope>
    <scope>COFACTOR</scope>
    <scope>SUBUNIT</scope>
</reference>
<accession>O08498</accession>
<protein>
    <recommendedName>
        <fullName evidence="5">Metallo-beta-lactamase type 2</fullName>
        <ecNumber evidence="2">3.5.2.6</ecNumber>
    </recommendedName>
    <alternativeName>
        <fullName evidence="5">B2 metallo-beta-lactamase</fullName>
    </alternativeName>
    <alternativeName>
        <fullName evidence="3">Beta-lactamase type II</fullName>
    </alternativeName>
    <alternativeName>
        <fullName evidence="4">Carbapenem-hydrolyzing beta-lactamase BlaB-1</fullName>
        <shortName evidence="3">CHbetaL-1</shortName>
    </alternativeName>
    <alternativeName>
        <fullName evidence="3">Class B carbapenemase BlaB-1</fullName>
    </alternativeName>
    <alternativeName>
        <fullName evidence="3">Metallo-beta-lactamase type II</fullName>
    </alternativeName>
</protein>
<dbReference type="EC" id="3.5.2.6" evidence="2"/>
<dbReference type="EMBL" id="X96858">
    <property type="protein sequence ID" value="CAA65601.1"/>
    <property type="molecule type" value="Genomic_DNA"/>
</dbReference>
<dbReference type="EMBL" id="AF189298">
    <property type="protein sequence ID" value="AAF89154.1"/>
    <property type="molecule type" value="Genomic_DNA"/>
</dbReference>
<dbReference type="RefSeq" id="WP_029729112.1">
    <property type="nucleotide sequence ID" value="NG_048691.1"/>
</dbReference>
<dbReference type="PDB" id="1M2X">
    <property type="method" value="X-ray"/>
    <property type="resolution" value="1.50 A"/>
    <property type="chains" value="A/B/C/D=27-249"/>
</dbReference>
<dbReference type="PDBsum" id="1M2X"/>
<dbReference type="SMR" id="O08498"/>
<dbReference type="ChEMBL" id="CHEMBL1667692"/>
<dbReference type="DrugBank" id="DB02032">
    <property type="generic name" value="Epicaptopril"/>
</dbReference>
<dbReference type="CARD" id="ARO:3005522">
    <property type="molecule name" value="BlaB-1"/>
    <property type="mechanism identifier" value="ARO:0001004"/>
    <property type="mechanism name" value="antibiotic inactivation"/>
</dbReference>
<dbReference type="KEGG" id="ag:CAA65601"/>
<dbReference type="BioCyc" id="MetaCyc:MONOMER-13428"/>
<dbReference type="EvolutionaryTrace" id="O08498"/>
<dbReference type="GO" id="GO:0042597">
    <property type="term" value="C:periplasmic space"/>
    <property type="evidence" value="ECO:0007669"/>
    <property type="project" value="UniProtKB-SubCell"/>
</dbReference>
<dbReference type="GO" id="GO:0008800">
    <property type="term" value="F:beta-lactamase activity"/>
    <property type="evidence" value="ECO:0000314"/>
    <property type="project" value="UniProtKB"/>
</dbReference>
<dbReference type="GO" id="GO:0008270">
    <property type="term" value="F:zinc ion binding"/>
    <property type="evidence" value="ECO:0000314"/>
    <property type="project" value="UniProtKB"/>
</dbReference>
<dbReference type="GO" id="GO:0017001">
    <property type="term" value="P:antibiotic catabolic process"/>
    <property type="evidence" value="ECO:0000314"/>
    <property type="project" value="UniProtKB"/>
</dbReference>
<dbReference type="GO" id="GO:0046677">
    <property type="term" value="P:response to antibiotic"/>
    <property type="evidence" value="ECO:0007669"/>
    <property type="project" value="UniProtKB-KW"/>
</dbReference>
<dbReference type="CDD" id="cd16316">
    <property type="entry name" value="BlaB-like_MBL-B1"/>
    <property type="match status" value="1"/>
</dbReference>
<dbReference type="FunFam" id="3.60.15.10:FF:000096">
    <property type="entry name" value="Metallo-beta-lactamase type 2"/>
    <property type="match status" value="1"/>
</dbReference>
<dbReference type="Gene3D" id="3.60.15.10">
    <property type="entry name" value="Ribonuclease Z/Hydroxyacylglutathione hydrolase-like"/>
    <property type="match status" value="1"/>
</dbReference>
<dbReference type="InterPro" id="IPR001018">
    <property type="entry name" value="Beta-lactamase_class-B_CS"/>
</dbReference>
<dbReference type="InterPro" id="IPR001279">
    <property type="entry name" value="Metallo-B-lactamas"/>
</dbReference>
<dbReference type="InterPro" id="IPR050855">
    <property type="entry name" value="NDM-1-like"/>
</dbReference>
<dbReference type="InterPro" id="IPR036866">
    <property type="entry name" value="RibonucZ/Hydroxyglut_hydro"/>
</dbReference>
<dbReference type="NCBIfam" id="NF012229">
    <property type="entry name" value="bla_class_B_core"/>
    <property type="match status" value="1"/>
</dbReference>
<dbReference type="NCBIfam" id="NF033088">
    <property type="entry name" value="bla_subclass_B1"/>
    <property type="match status" value="1"/>
</dbReference>
<dbReference type="NCBIfam" id="NF033107">
    <property type="entry name" value="blaB"/>
    <property type="match status" value="1"/>
</dbReference>
<dbReference type="NCBIfam" id="NF012146">
    <property type="entry name" value="blaB-IND-MUS"/>
    <property type="match status" value="1"/>
</dbReference>
<dbReference type="PANTHER" id="PTHR42951:SF4">
    <property type="entry name" value="ACYL-COENZYME A THIOESTERASE MBLAC2"/>
    <property type="match status" value="1"/>
</dbReference>
<dbReference type="PANTHER" id="PTHR42951">
    <property type="entry name" value="METALLO-BETA-LACTAMASE DOMAIN-CONTAINING"/>
    <property type="match status" value="1"/>
</dbReference>
<dbReference type="Pfam" id="PF00753">
    <property type="entry name" value="Lactamase_B"/>
    <property type="match status" value="1"/>
</dbReference>
<dbReference type="SMART" id="SM00849">
    <property type="entry name" value="Lactamase_B"/>
    <property type="match status" value="1"/>
</dbReference>
<dbReference type="SUPFAM" id="SSF56281">
    <property type="entry name" value="Metallo-hydrolase/oxidoreductase"/>
    <property type="match status" value="1"/>
</dbReference>
<dbReference type="PROSITE" id="PS00743">
    <property type="entry name" value="BETA_LACTAMASE_B_1"/>
    <property type="match status" value="1"/>
</dbReference>
<dbReference type="PROSITE" id="PS00744">
    <property type="entry name" value="BETA_LACTAMASE_B_2"/>
    <property type="match status" value="1"/>
</dbReference>
<sequence length="249" mass="28144">MLKKIKISLILALGLTSLQAFGQENPDVKIEKLKDNLYVYTTYNTFNGTKYAANAVYLVTDKGVVVIDCPWGEDKFKSFTDEIYKKHGKKVIMNIATHSHDDRAGGLEYFGKIGAKTYSTKMTDSILAKENKPRAQYTFDNNKSFKVGKSEFQVYYPGKGHTADNVVVWFPKEKVLVGGCIIKSADSKDLGYIGEAYVNDWTQSVHNIQQKFSGAQYVVAGHDDWKDQRSIQHTLDLINEYQQKQKASN</sequence>
<keyword id="KW-0002">3D-structure</keyword>
<keyword id="KW-0046">Antibiotic resistance</keyword>
<keyword id="KW-0903">Direct protein sequencing</keyword>
<keyword id="KW-0378">Hydrolase</keyword>
<keyword id="KW-0479">Metal-binding</keyword>
<keyword id="KW-0574">Periplasm</keyword>
<keyword id="KW-0732">Signal</keyword>
<keyword id="KW-0862">Zinc</keyword>
<name>BLAB1_ELIME</name>
<proteinExistence type="evidence at protein level"/>
<organism>
    <name type="scientific">Elizabethkingia meningoseptica</name>
    <name type="common">Chryseobacterium meningosepticum</name>
    <dbReference type="NCBI Taxonomy" id="238"/>
    <lineage>
        <taxon>Bacteria</taxon>
        <taxon>Pseudomonadati</taxon>
        <taxon>Bacteroidota</taxon>
        <taxon>Flavobacteriia</taxon>
        <taxon>Flavobacteriales</taxon>
        <taxon>Weeksellaceae</taxon>
        <taxon>Elizabethkingia</taxon>
    </lineage>
</organism>
<feature type="signal peptide" evidence="2">
    <location>
        <begin position="1"/>
        <end position="22"/>
    </location>
</feature>
<feature type="chain" id="PRO_0000016949" description="Metallo-beta-lactamase type 2">
    <location>
        <begin position="23"/>
        <end position="249"/>
    </location>
</feature>
<feature type="binding site" evidence="1">
    <location>
        <position position="98"/>
    </location>
    <ligand>
        <name>Zn(2+)</name>
        <dbReference type="ChEBI" id="CHEBI:29105"/>
        <label>1</label>
    </ligand>
</feature>
<feature type="binding site" evidence="1">
    <location>
        <position position="100"/>
    </location>
    <ligand>
        <name>Zn(2+)</name>
        <dbReference type="ChEBI" id="CHEBI:29105"/>
        <label>1</label>
    </ligand>
</feature>
<feature type="binding site" evidence="1">
    <location>
        <position position="102"/>
    </location>
    <ligand>
        <name>Zn(2+)</name>
        <dbReference type="ChEBI" id="CHEBI:29105"/>
        <label>2</label>
    </ligand>
</feature>
<feature type="binding site" evidence="1">
    <location>
        <position position="161"/>
    </location>
    <ligand>
        <name>Zn(2+)</name>
        <dbReference type="ChEBI" id="CHEBI:29105"/>
        <label>1</label>
    </ligand>
</feature>
<feature type="binding site" evidence="1">
    <location>
        <position position="180"/>
    </location>
    <ligand>
        <name>Zn(2+)</name>
        <dbReference type="ChEBI" id="CHEBI:29105"/>
        <label>2</label>
    </ligand>
</feature>
<feature type="binding site" evidence="1">
    <location>
        <position position="183"/>
    </location>
    <ligand>
        <name>substrate</name>
    </ligand>
</feature>
<feature type="binding site" evidence="1">
    <location>
        <position position="222"/>
    </location>
    <ligand>
        <name>Zn(2+)</name>
        <dbReference type="ChEBI" id="CHEBI:29105"/>
        <label>2</label>
    </ligand>
</feature>
<feature type="strand" evidence="6">
    <location>
        <begin position="28"/>
        <end position="34"/>
    </location>
</feature>
<feature type="strand" evidence="6">
    <location>
        <begin position="37"/>
        <end position="46"/>
    </location>
</feature>
<feature type="strand" evidence="6">
    <location>
        <begin position="49"/>
        <end position="60"/>
    </location>
</feature>
<feature type="strand" evidence="6">
    <location>
        <begin position="63"/>
        <end position="68"/>
    </location>
</feature>
<feature type="helix" evidence="6">
    <location>
        <begin position="73"/>
        <end position="75"/>
    </location>
</feature>
<feature type="helix" evidence="6">
    <location>
        <begin position="76"/>
        <end position="87"/>
    </location>
</feature>
<feature type="strand" evidence="6">
    <location>
        <begin position="91"/>
        <end position="95"/>
    </location>
</feature>
<feature type="strand" evidence="6">
    <location>
        <begin position="97"/>
        <end position="100"/>
    </location>
</feature>
<feature type="turn" evidence="6">
    <location>
        <begin position="101"/>
        <end position="103"/>
    </location>
</feature>
<feature type="helix" evidence="6">
    <location>
        <begin position="107"/>
        <end position="112"/>
    </location>
</feature>
<feature type="strand" evidence="6">
    <location>
        <begin position="116"/>
        <end position="120"/>
    </location>
</feature>
<feature type="helix" evidence="6">
    <location>
        <begin position="121"/>
        <end position="129"/>
    </location>
</feature>
<feature type="strand" evidence="6">
    <location>
        <begin position="136"/>
        <end position="141"/>
    </location>
</feature>
<feature type="strand" evidence="6">
    <location>
        <begin position="143"/>
        <end position="147"/>
    </location>
</feature>
<feature type="strand" evidence="6">
    <location>
        <begin position="150"/>
        <end position="155"/>
    </location>
</feature>
<feature type="strand" evidence="6">
    <location>
        <begin position="159"/>
        <end position="164"/>
    </location>
</feature>
<feature type="strand" evidence="6">
    <location>
        <begin position="167"/>
        <end position="170"/>
    </location>
</feature>
<feature type="turn" evidence="6">
    <location>
        <begin position="171"/>
        <end position="174"/>
    </location>
</feature>
<feature type="strand" evidence="6">
    <location>
        <begin position="175"/>
        <end position="179"/>
    </location>
</feature>
<feature type="helix" evidence="6">
    <location>
        <begin position="198"/>
        <end position="211"/>
    </location>
</feature>
<feature type="turn" evidence="6">
    <location>
        <begin position="212"/>
        <end position="214"/>
    </location>
</feature>
<feature type="strand" evidence="6">
    <location>
        <begin position="216"/>
        <end position="223"/>
    </location>
</feature>
<feature type="helix" evidence="6">
    <location>
        <begin position="230"/>
        <end position="243"/>
    </location>
</feature>